<reference key="1">
    <citation type="journal article" date="2008" name="FEMS Yeast Res.">
        <title>Comparative genome analysis of a Saccharomyces cerevisiae wine strain.</title>
        <authorList>
            <person name="Borneman A.R."/>
            <person name="Forgan A.H."/>
            <person name="Pretorius I.S."/>
            <person name="Chambers P.J."/>
        </authorList>
    </citation>
    <scope>NUCLEOTIDE SEQUENCE [LARGE SCALE GENOMIC DNA]</scope>
    <source>
        <strain>AWRI1631</strain>
    </source>
</reference>
<name>AIM41_YEAS6</name>
<comment type="subcellular location">
    <subcellularLocation>
        <location evidence="1">Mitochondrion</location>
    </subcellularLocation>
</comment>
<comment type="similarity">
    <text evidence="3">Belongs to the AIM41 family.</text>
</comment>
<accession>B5VS96</accession>
<protein>
    <recommendedName>
        <fullName>Altered inheritance of mitochondria protein 41, mitochondrial</fullName>
    </recommendedName>
</protein>
<feature type="transit peptide" description="Mitochondrion" evidence="2">
    <location>
        <begin position="1"/>
        <end position="53"/>
    </location>
</feature>
<feature type="chain" id="PRO_0000399873" description="Altered inheritance of mitochondria protein 41, mitochondrial">
    <location>
        <begin position="54"/>
        <end position="185"/>
    </location>
</feature>
<sequence>MFRQSIRPLVSNRLTFIRYNSSPAYTAAVSLLKGDLKKAMIAKDEMKKTAIRNMLSAIKNKEIALKGKSADEYSLYDMYSKLISQRKDSINEFLANKRDDLVAKEQGEMDIIKKYMDQLPVSSELDIDQNVKKLLDALKTKAGEKKVQIKEIMGEIDWKSLPTEWKTSPTAIKNSIVKQFKEIFK</sequence>
<evidence type="ECO:0000250" key="1"/>
<evidence type="ECO:0000255" key="2"/>
<evidence type="ECO:0000305" key="3"/>
<keyword id="KW-0496">Mitochondrion</keyword>
<keyword id="KW-0809">Transit peptide</keyword>
<organism>
    <name type="scientific">Saccharomyces cerevisiae (strain AWRI1631)</name>
    <name type="common">Baker's yeast</name>
    <dbReference type="NCBI Taxonomy" id="545124"/>
    <lineage>
        <taxon>Eukaryota</taxon>
        <taxon>Fungi</taxon>
        <taxon>Dikarya</taxon>
        <taxon>Ascomycota</taxon>
        <taxon>Saccharomycotina</taxon>
        <taxon>Saccharomycetes</taxon>
        <taxon>Saccharomycetales</taxon>
        <taxon>Saccharomycetaceae</taxon>
        <taxon>Saccharomyces</taxon>
    </lineage>
</organism>
<gene>
    <name type="primary">AIM41</name>
    <name type="ORF">AWRI1631_153640</name>
</gene>
<proteinExistence type="inferred from homology"/>
<dbReference type="EMBL" id="ABSV01002203">
    <property type="protein sequence ID" value="EDZ69191.1"/>
    <property type="molecule type" value="Genomic_DNA"/>
</dbReference>
<dbReference type="SMR" id="B5VS96"/>
<dbReference type="Proteomes" id="UP000008988">
    <property type="component" value="Unassembled WGS sequence"/>
</dbReference>
<dbReference type="GO" id="GO:0005739">
    <property type="term" value="C:mitochondrion"/>
    <property type="evidence" value="ECO:0007669"/>
    <property type="project" value="UniProtKB-SubCell"/>
</dbReference>
<dbReference type="GO" id="GO:0016884">
    <property type="term" value="F:carbon-nitrogen ligase activity, with glutamine as amido-N-donor"/>
    <property type="evidence" value="ECO:0007669"/>
    <property type="project" value="InterPro"/>
</dbReference>
<dbReference type="FunFam" id="1.10.1510.10:FF:000002">
    <property type="entry name" value="Altered inheritance of mitochondria protein 41, mitochondrial"/>
    <property type="match status" value="1"/>
</dbReference>
<dbReference type="Gene3D" id="1.10.1510.10">
    <property type="entry name" value="Uncharacterised protein YqeY/AIM41 PF09424, N-terminal domain"/>
    <property type="match status" value="1"/>
</dbReference>
<dbReference type="InterPro" id="IPR003789">
    <property type="entry name" value="Asn/Gln_tRNA_amidoTrase-B-like"/>
</dbReference>
<dbReference type="InterPro" id="IPR019004">
    <property type="entry name" value="YqeY/Aim41"/>
</dbReference>
<dbReference type="InterPro" id="IPR042184">
    <property type="entry name" value="YqeY/Aim41_N"/>
</dbReference>
<dbReference type="PANTHER" id="PTHR28055">
    <property type="entry name" value="ALTERED INHERITANCE OF MITOCHONDRIA PROTEIN 41, MITOCHONDRIAL"/>
    <property type="match status" value="1"/>
</dbReference>
<dbReference type="PANTHER" id="PTHR28055:SF1">
    <property type="entry name" value="ALTERED INHERITANCE OF MITOCHONDRIA PROTEIN 41, MITOCHONDRIAL"/>
    <property type="match status" value="1"/>
</dbReference>
<dbReference type="Pfam" id="PF09424">
    <property type="entry name" value="YqeY"/>
    <property type="match status" value="1"/>
</dbReference>
<dbReference type="SUPFAM" id="SSF89095">
    <property type="entry name" value="GatB/YqeY motif"/>
    <property type="match status" value="1"/>
</dbReference>